<sequence length="298" mass="32992">MSTNAKESAGKNIKYPWWYGGAAGIFATMVTHPLDLAKVRLQAAPMPKPTLFRMLESILANEGVVGLYSGLSAAVLRQCTYTTVRFGAYDLLKENVIPREQLTNMAYLLPCSMFSGAIGGLAGNFADVVNIRMQNDSALEAAKRRNYKNAIDGVYKIYRYEGGLKTLFTGWKPNMVRGILMTASQVVTYDVFKNYLVTKLDFDASKNYTHLTASLLAGLVATTVCSPADVMKTRIMNGSGDHQPALKILADAVRKEGPSFMFRGWLPSFTRLGPFTMLIFFAIEQLKKHRVGMPKEDK</sequence>
<feature type="chain" id="PRO_0000233005" description="Mitochondrial dicarboxylate transporter">
    <location>
        <begin position="1"/>
        <end position="298"/>
    </location>
</feature>
<feature type="transmembrane region" description="Helical; Name=1" evidence="1">
    <location>
        <begin position="17"/>
        <end position="37"/>
    </location>
</feature>
<feature type="transmembrane region" description="Helical; Name=2" evidence="1">
    <location>
        <begin position="58"/>
        <end position="76"/>
    </location>
</feature>
<feature type="transmembrane region" description="Helical; Name=3" evidence="1">
    <location>
        <begin position="105"/>
        <end position="126"/>
    </location>
</feature>
<feature type="transmembrane region" description="Helical; Name=4" evidence="1">
    <location>
        <begin position="170"/>
        <end position="189"/>
    </location>
</feature>
<feature type="transmembrane region" description="Helical; Name=5" evidence="1">
    <location>
        <begin position="211"/>
        <end position="231"/>
    </location>
</feature>
<feature type="transmembrane region" description="Helical; Name=6" evidence="1">
    <location>
        <begin position="265"/>
        <end position="283"/>
    </location>
</feature>
<feature type="repeat" description="Solcar 1">
    <location>
        <begin position="11"/>
        <end position="95"/>
    </location>
</feature>
<feature type="repeat" description="Solcar 2">
    <location>
        <begin position="103"/>
        <end position="195"/>
    </location>
</feature>
<feature type="repeat" description="Solcar 3">
    <location>
        <begin position="205"/>
        <end position="289"/>
    </location>
</feature>
<gene>
    <name type="primary">DIC1</name>
    <name type="ordered locus">YLR348C</name>
</gene>
<organism>
    <name type="scientific">Saccharomyces cerevisiae (strain ATCC 204508 / S288c)</name>
    <name type="common">Baker's yeast</name>
    <dbReference type="NCBI Taxonomy" id="559292"/>
    <lineage>
        <taxon>Eukaryota</taxon>
        <taxon>Fungi</taxon>
        <taxon>Dikarya</taxon>
        <taxon>Ascomycota</taxon>
        <taxon>Saccharomycotina</taxon>
        <taxon>Saccharomycetes</taxon>
        <taxon>Saccharomycetales</taxon>
        <taxon>Saccharomycetaceae</taxon>
        <taxon>Saccharomyces</taxon>
    </lineage>
</organism>
<evidence type="ECO:0000255" key="1"/>
<evidence type="ECO:0000269" key="2">
    <source>
    </source>
</evidence>
<evidence type="ECO:0000269" key="3">
    <source>
    </source>
</evidence>
<evidence type="ECO:0000269" key="4">
    <source>
    </source>
</evidence>
<evidence type="ECO:0000269" key="5">
    <source>
    </source>
</evidence>
<evidence type="ECO:0000269" key="6">
    <source>
    </source>
</evidence>
<evidence type="ECO:0000269" key="7">
    <source>
    </source>
</evidence>
<evidence type="ECO:0000269" key="8">
    <source>
    </source>
</evidence>
<evidence type="ECO:0000269" key="9">
    <source>
    </source>
</evidence>
<evidence type="ECO:0000305" key="10"/>
<dbReference type="EMBL" id="U79459">
    <property type="protein sequence ID" value="AAB71336.1"/>
    <property type="molecule type" value="Genomic_DNA"/>
</dbReference>
<dbReference type="EMBL" id="U19028">
    <property type="protein sequence ID" value="AAB67266.1"/>
    <property type="molecule type" value="Genomic_DNA"/>
</dbReference>
<dbReference type="EMBL" id="BK006945">
    <property type="protein sequence ID" value="DAA09653.1"/>
    <property type="molecule type" value="Genomic_DNA"/>
</dbReference>
<dbReference type="PIR" id="S51351">
    <property type="entry name" value="S51351"/>
</dbReference>
<dbReference type="RefSeq" id="NP_013452.1">
    <property type="nucleotide sequence ID" value="NM_001182237.1"/>
</dbReference>
<dbReference type="SMR" id="Q06143"/>
<dbReference type="BioGRID" id="31611">
    <property type="interactions" value="122"/>
</dbReference>
<dbReference type="DIP" id="DIP-8816N"/>
<dbReference type="FunCoup" id="Q06143">
    <property type="interactions" value="1143"/>
</dbReference>
<dbReference type="IntAct" id="Q06143">
    <property type="interactions" value="1"/>
</dbReference>
<dbReference type="STRING" id="4932.YLR348C"/>
<dbReference type="TCDB" id="2.A.29.2.3">
    <property type="family name" value="the mitochondrial carrier (mc) family"/>
</dbReference>
<dbReference type="PaxDb" id="4932-YLR348C"/>
<dbReference type="PeptideAtlas" id="Q06143"/>
<dbReference type="EnsemblFungi" id="YLR348C_mRNA">
    <property type="protein sequence ID" value="YLR348C"/>
    <property type="gene ID" value="YLR348C"/>
</dbReference>
<dbReference type="GeneID" id="851063"/>
<dbReference type="KEGG" id="sce:YLR348C"/>
<dbReference type="AGR" id="SGD:S000004340"/>
<dbReference type="SGD" id="S000004340">
    <property type="gene designation" value="DIC1"/>
</dbReference>
<dbReference type="VEuPathDB" id="FungiDB:YLR348C"/>
<dbReference type="eggNOG" id="KOG0759">
    <property type="taxonomic scope" value="Eukaryota"/>
</dbReference>
<dbReference type="GeneTree" id="ENSGT00940000156783"/>
<dbReference type="HOGENOM" id="CLU_015166_14_1_1"/>
<dbReference type="InParanoid" id="Q06143"/>
<dbReference type="OMA" id="IMPALNW"/>
<dbReference type="OrthoDB" id="448427at2759"/>
<dbReference type="BioCyc" id="YEAST:G3O-32424-MONOMER"/>
<dbReference type="Reactome" id="R-SCE-1614517">
    <property type="pathway name" value="Sulfide oxidation to sulfate"/>
</dbReference>
<dbReference type="Reactome" id="R-SCE-428643">
    <property type="pathway name" value="Organic anion transporters"/>
</dbReference>
<dbReference type="SABIO-RK" id="Q06143"/>
<dbReference type="BioGRID-ORCS" id="851063">
    <property type="hits" value="3 hits in 10 CRISPR screens"/>
</dbReference>
<dbReference type="PRO" id="PR:Q06143"/>
<dbReference type="Proteomes" id="UP000002311">
    <property type="component" value="Chromosome XII"/>
</dbReference>
<dbReference type="RNAct" id="Q06143">
    <property type="molecule type" value="protein"/>
</dbReference>
<dbReference type="GO" id="GO:0005740">
    <property type="term" value="C:mitochondrial envelope"/>
    <property type="evidence" value="ECO:0000314"/>
    <property type="project" value="SGD"/>
</dbReference>
<dbReference type="GO" id="GO:0005743">
    <property type="term" value="C:mitochondrial inner membrane"/>
    <property type="evidence" value="ECO:0007669"/>
    <property type="project" value="UniProtKB-SubCell"/>
</dbReference>
<dbReference type="GO" id="GO:0005739">
    <property type="term" value="C:mitochondrion"/>
    <property type="evidence" value="ECO:0007005"/>
    <property type="project" value="SGD"/>
</dbReference>
<dbReference type="GO" id="GO:0015297">
    <property type="term" value="F:antiporter activity"/>
    <property type="evidence" value="ECO:0007669"/>
    <property type="project" value="UniProtKB-KW"/>
</dbReference>
<dbReference type="GO" id="GO:0005310">
    <property type="term" value="F:dicarboxylic acid transmembrane transporter activity"/>
    <property type="evidence" value="ECO:0000314"/>
    <property type="project" value="SGD"/>
</dbReference>
<dbReference type="GO" id="GO:0015140">
    <property type="term" value="F:malate transmembrane transporter activity"/>
    <property type="evidence" value="ECO:0000318"/>
    <property type="project" value="GO_Central"/>
</dbReference>
<dbReference type="GO" id="GO:0015131">
    <property type="term" value="F:oxaloacetate transmembrane transporter activity"/>
    <property type="evidence" value="ECO:0000318"/>
    <property type="project" value="GO_Central"/>
</dbReference>
<dbReference type="GO" id="GO:0015141">
    <property type="term" value="F:succinate transmembrane transporter activity"/>
    <property type="evidence" value="ECO:0000318"/>
    <property type="project" value="GO_Central"/>
</dbReference>
<dbReference type="GO" id="GO:0015116">
    <property type="term" value="F:sulfate transmembrane transporter activity"/>
    <property type="evidence" value="ECO:0000318"/>
    <property type="project" value="GO_Central"/>
</dbReference>
<dbReference type="GO" id="GO:0015117">
    <property type="term" value="F:thiosulfate transmembrane transporter activity"/>
    <property type="evidence" value="ECO:0000318"/>
    <property type="project" value="GO_Central"/>
</dbReference>
<dbReference type="GO" id="GO:0006835">
    <property type="term" value="P:dicarboxylic acid transport"/>
    <property type="evidence" value="ECO:0000314"/>
    <property type="project" value="SGD"/>
</dbReference>
<dbReference type="GO" id="GO:0071423">
    <property type="term" value="P:malate transmembrane transport"/>
    <property type="evidence" value="ECO:0000318"/>
    <property type="project" value="GO_Central"/>
</dbReference>
<dbReference type="GO" id="GO:0015729">
    <property type="term" value="P:oxaloacetate transport"/>
    <property type="evidence" value="ECO:0000318"/>
    <property type="project" value="GO_Central"/>
</dbReference>
<dbReference type="GO" id="GO:0035435">
    <property type="term" value="P:phosphate ion transmembrane transport"/>
    <property type="evidence" value="ECO:0000318"/>
    <property type="project" value="GO_Central"/>
</dbReference>
<dbReference type="GO" id="GO:0071422">
    <property type="term" value="P:succinate transmembrane transport"/>
    <property type="evidence" value="ECO:0000318"/>
    <property type="project" value="GO_Central"/>
</dbReference>
<dbReference type="GO" id="GO:1902358">
    <property type="term" value="P:sulfate transmembrane transport"/>
    <property type="evidence" value="ECO:0000318"/>
    <property type="project" value="GO_Central"/>
</dbReference>
<dbReference type="GO" id="GO:0015709">
    <property type="term" value="P:thiosulfate transport"/>
    <property type="evidence" value="ECO:0000318"/>
    <property type="project" value="GO_Central"/>
</dbReference>
<dbReference type="FunFam" id="1.50.40.10:FF:000164">
    <property type="entry name" value="Dicarboxylate transporter"/>
    <property type="match status" value="1"/>
</dbReference>
<dbReference type="Gene3D" id="1.50.40.10">
    <property type="entry name" value="Mitochondrial carrier domain"/>
    <property type="match status" value="1"/>
</dbReference>
<dbReference type="InterPro" id="IPR050391">
    <property type="entry name" value="Mito_Metabolite_Transporter"/>
</dbReference>
<dbReference type="InterPro" id="IPR018108">
    <property type="entry name" value="Mitochondrial_sb/sol_carrier"/>
</dbReference>
<dbReference type="InterPro" id="IPR023395">
    <property type="entry name" value="Mt_carrier_dom_sf"/>
</dbReference>
<dbReference type="PANTHER" id="PTHR45618">
    <property type="entry name" value="MITOCHONDRIAL DICARBOXYLATE CARRIER-RELATED"/>
    <property type="match status" value="1"/>
</dbReference>
<dbReference type="Pfam" id="PF00153">
    <property type="entry name" value="Mito_carr"/>
    <property type="match status" value="3"/>
</dbReference>
<dbReference type="SUPFAM" id="SSF103506">
    <property type="entry name" value="Mitochondrial carrier"/>
    <property type="match status" value="1"/>
</dbReference>
<dbReference type="PROSITE" id="PS50920">
    <property type="entry name" value="SOLCAR"/>
    <property type="match status" value="3"/>
</dbReference>
<keyword id="KW-0050">Antiport</keyword>
<keyword id="KW-0472">Membrane</keyword>
<keyword id="KW-0496">Mitochondrion</keyword>
<keyword id="KW-0999">Mitochondrion inner membrane</keyword>
<keyword id="KW-0592">Phosphate transport</keyword>
<keyword id="KW-1185">Reference proteome</keyword>
<keyword id="KW-0677">Repeat</keyword>
<keyword id="KW-0812">Transmembrane</keyword>
<keyword id="KW-1133">Transmembrane helix</keyword>
<keyword id="KW-0813">Transport</keyword>
<proteinExistence type="evidence at protein level"/>
<accession>Q06143</accession>
<accession>D6VYY7</accession>
<accession>P87332</accession>
<protein>
    <recommendedName>
        <fullName>Mitochondrial dicarboxylate transporter</fullName>
    </recommendedName>
    <alternativeName>
        <fullName>DTP</fullName>
    </alternativeName>
    <alternativeName>
        <fullName>Dicarboxylate carrier 1</fullName>
    </alternativeName>
</protein>
<name>DIC1_YEAST</name>
<comment type="function">
    <text evidence="2 7 8 9">Mitochondrial dicarboxylic transporter catalyzing the exchange of dicarboxylic acids like malate and succinate for inorganic phosphate. Required for growth on ethanol and acetate.</text>
</comment>
<comment type="biophysicochemical properties">
    <kinetics>
        <KM evidence="2 8 9">1.55 mM for malonate</KM>
        <Vmax evidence="2 8 9">3.0 umol/min/mg enzyme</Vmax>
    </kinetics>
</comment>
<comment type="subunit">
    <text evidence="2">Homodimer. Binds to the TIM22 translocation complex during import.</text>
</comment>
<comment type="subcellular location">
    <subcellularLocation>
        <location evidence="2 3 5">Mitochondrion inner membrane</location>
        <topology evidence="2 3 5">Multi-pass membrane protein</topology>
    </subcellularLocation>
</comment>
<comment type="domain">
    <text evidence="6">The C-terminal Solcar repeat is required for association with the TIM22 translocation complex during import.</text>
</comment>
<comment type="miscellaneous">
    <text evidence="4">Present with 3390 molecules/cell in log phase SD medium.</text>
</comment>
<comment type="similarity">
    <text evidence="10">Belongs to the mitochondrial carrier (TC 2.A.29) family.</text>
</comment>
<reference key="1">
    <citation type="journal article" date="1997" name="J. Biol. Chem.">
        <title>Identification of a novel gene encoding the yeast mitochondrial dicarboxylate transport protein via overexpression, purification, and characterization of its protein product.</title>
        <authorList>
            <person name="Kakhniashvili D."/>
            <person name="Mayor J.A."/>
            <person name="Gremse D.A."/>
            <person name="Xu Y."/>
            <person name="Kaplan R.S."/>
        </authorList>
    </citation>
    <scope>NUCLEOTIDE SEQUENCE [GENOMIC DNA]</scope>
    <scope>FUNCTION</scope>
    <scope>BIOPHYSICOCHEMICAL PROPERTIES</scope>
    <source>
        <strain>ATCC 204508 / S288c</strain>
    </source>
</reference>
<reference key="2">
    <citation type="journal article" date="1997" name="Nature">
        <title>The nucleotide sequence of Saccharomyces cerevisiae chromosome XII.</title>
        <authorList>
            <person name="Johnston M."/>
            <person name="Hillier L.W."/>
            <person name="Riles L."/>
            <person name="Albermann K."/>
            <person name="Andre B."/>
            <person name="Ansorge W."/>
            <person name="Benes V."/>
            <person name="Brueckner M."/>
            <person name="Delius H."/>
            <person name="Dubois E."/>
            <person name="Duesterhoeft A."/>
            <person name="Entian K.-D."/>
            <person name="Floeth M."/>
            <person name="Goffeau A."/>
            <person name="Hebling U."/>
            <person name="Heumann K."/>
            <person name="Heuss-Neitzel D."/>
            <person name="Hilbert H."/>
            <person name="Hilger F."/>
            <person name="Kleine K."/>
            <person name="Koetter P."/>
            <person name="Louis E.J."/>
            <person name="Messenguy F."/>
            <person name="Mewes H.-W."/>
            <person name="Miosga T."/>
            <person name="Moestl D."/>
            <person name="Mueller-Auer S."/>
            <person name="Nentwich U."/>
            <person name="Obermaier B."/>
            <person name="Piravandi E."/>
            <person name="Pohl T.M."/>
            <person name="Portetelle D."/>
            <person name="Purnelle B."/>
            <person name="Rechmann S."/>
            <person name="Rieger M."/>
            <person name="Rinke M."/>
            <person name="Rose M."/>
            <person name="Scharfe M."/>
            <person name="Scherens B."/>
            <person name="Scholler P."/>
            <person name="Schwager C."/>
            <person name="Schwarz S."/>
            <person name="Underwood A.P."/>
            <person name="Urrestarazu L.A."/>
            <person name="Vandenbol M."/>
            <person name="Verhasselt P."/>
            <person name="Vierendeels F."/>
            <person name="Voet M."/>
            <person name="Volckaert G."/>
            <person name="Voss H."/>
            <person name="Wambutt R."/>
            <person name="Wedler E."/>
            <person name="Wedler H."/>
            <person name="Zimmermann F.K."/>
            <person name="Zollner A."/>
            <person name="Hani J."/>
            <person name="Hoheisel J.D."/>
        </authorList>
    </citation>
    <scope>NUCLEOTIDE SEQUENCE [LARGE SCALE GENOMIC DNA]</scope>
    <source>
        <strain>ATCC 204508 / S288c</strain>
    </source>
</reference>
<reference key="3">
    <citation type="journal article" date="2014" name="G3 (Bethesda)">
        <title>The reference genome sequence of Saccharomyces cerevisiae: Then and now.</title>
        <authorList>
            <person name="Engel S.R."/>
            <person name="Dietrich F.S."/>
            <person name="Fisk D.G."/>
            <person name="Binkley G."/>
            <person name="Balakrishnan R."/>
            <person name="Costanzo M.C."/>
            <person name="Dwight S.S."/>
            <person name="Hitz B.C."/>
            <person name="Karra K."/>
            <person name="Nash R.S."/>
            <person name="Weng S."/>
            <person name="Wong E.D."/>
            <person name="Lloyd P."/>
            <person name="Skrzypek M.S."/>
            <person name="Miyasato S.R."/>
            <person name="Simison M."/>
            <person name="Cherry J.M."/>
        </authorList>
    </citation>
    <scope>GENOME REANNOTATION</scope>
    <source>
        <strain>ATCC 204508 / S288c</strain>
    </source>
</reference>
<reference key="4">
    <citation type="journal article" date="1996" name="Biochimie">
        <title>Characterization, purification and properties of the yeast mitochondrial dicarboxylate carrier (Saccharomyces cerevisiae).</title>
        <authorList>
            <person name="Lancar-Benba J."/>
            <person name="Foucher B."/>
            <person name="Saint-Macary M."/>
        </authorList>
    </citation>
    <scope>FUNCTION</scope>
</reference>
<reference key="5">
    <citation type="journal article" date="1997" name="J. Bioenerg. Biomembr.">
        <title>Bacterial overexpression of putative yeast mitochondrial transport proteins.</title>
        <authorList>
            <person name="Mayor J.A."/>
            <person name="Kakhniashvili D."/>
            <person name="Gremse D.A."/>
            <person name="Campbell C."/>
            <person name="Kramer R."/>
            <person name="Schroers A."/>
            <person name="Kaplan R.S."/>
        </authorList>
    </citation>
    <scope>FUNCTION</scope>
    <scope>BIOPHYSICOCHEMICAL PROPERTIES</scope>
</reference>
<reference key="6">
    <citation type="journal article" date="1999" name="Mol. Microbiol.">
        <title>The mitochondrial dicarboxylate carrier is essential for the growth of Saccharomyces cerevisiae on ethanol or acetate as the sole carbon source.</title>
        <authorList>
            <person name="Palmieri L."/>
            <person name="Vozza A."/>
            <person name="Hoenlinger A."/>
            <person name="Dietmeier K."/>
            <person name="Palmisano A."/>
            <person name="Zara V."/>
            <person name="Palmieri F."/>
        </authorList>
    </citation>
    <scope>SUBCELLULAR LOCATION</scope>
    <scope>FUNCTION</scope>
    <scope>SUBUNIT</scope>
    <scope>BIOPHYSICOCHEMICAL PROPERTIES</scope>
</reference>
<reference key="7">
    <citation type="journal article" date="2001" name="J. Mol. Biol.">
        <title>Biogenesis of the dicarboxylate carrier (DIC): translocation across the mitochondrial outer membrane and subsequent release from the TOM channel are membrane potential-independent.</title>
        <authorList>
            <person name="Zara V."/>
            <person name="Palmisano I."/>
            <person name="Rassow J."/>
            <person name="Palmieri F."/>
        </authorList>
    </citation>
    <scope>TRANSLOCATION ACROSS THE MITOCHONDRIAL OUTER MEMBRANE</scope>
</reference>
<reference key="8">
    <citation type="journal article" date="2003" name="Nature">
        <title>Global analysis of protein localization in budding yeast.</title>
        <authorList>
            <person name="Huh W.-K."/>
            <person name="Falvo J.V."/>
            <person name="Gerke L.C."/>
            <person name="Carroll A.S."/>
            <person name="Howson R.W."/>
            <person name="Weissman J.S."/>
            <person name="O'Shea E.K."/>
        </authorList>
    </citation>
    <scope>SUBCELLULAR LOCATION [LARGE SCALE ANALYSIS]</scope>
</reference>
<reference key="9">
    <citation type="journal article" date="2003" name="Nature">
        <title>Global analysis of protein expression in yeast.</title>
        <authorList>
            <person name="Ghaemmaghami S."/>
            <person name="Huh W.-K."/>
            <person name="Bower K."/>
            <person name="Howson R.W."/>
            <person name="Belle A."/>
            <person name="Dephoure N."/>
            <person name="O'Shea E.K."/>
            <person name="Weissman J.S."/>
        </authorList>
    </citation>
    <scope>LEVEL OF PROTEIN EXPRESSION [LARGE SCALE ANALYSIS]</scope>
</reference>
<reference key="10">
    <citation type="journal article" date="2003" name="Proc. Natl. Acad. Sci. U.S.A.">
        <title>The proteome of Saccharomyces cerevisiae mitochondria.</title>
        <authorList>
            <person name="Sickmann A."/>
            <person name="Reinders J."/>
            <person name="Wagner Y."/>
            <person name="Joppich C."/>
            <person name="Zahedi R.P."/>
            <person name="Meyer H.E."/>
            <person name="Schoenfisch B."/>
            <person name="Perschil I."/>
            <person name="Chacinska A."/>
            <person name="Guiard B."/>
            <person name="Rehling P."/>
            <person name="Pfanner N."/>
            <person name="Meisinger C."/>
        </authorList>
    </citation>
    <scope>SUBCELLULAR LOCATION [LARGE SCALE ANALYSIS]</scope>
    <source>
        <strain>ATCC 76625 / YPH499</strain>
    </source>
</reference>
<reference key="11">
    <citation type="journal article" date="2005" name="J. Biol. Chem.">
        <title>The carboxyl-terminal third of the dicarboxylate carrier is crucial for productive association with the inner membrane twin-pore translocase.</title>
        <authorList>
            <person name="Brandner K."/>
            <person name="Rehling P."/>
            <person name="Truscott K.N."/>
        </authorList>
    </citation>
    <scope>DOMAIN</scope>
    <scope>TRANSLOCATION ACROSS THE MITOCHONDRIAL OUTER MEMBRANE</scope>
</reference>